<name>SOMA_MACMU</name>
<feature type="signal peptide" evidence="3">
    <location>
        <begin position="1"/>
        <end position="26"/>
    </location>
</feature>
<feature type="chain" id="PRO_0000032989" description="Somatotropin">
    <location>
        <begin position="27"/>
        <end position="217"/>
    </location>
</feature>
<feature type="binding site" evidence="1">
    <location>
        <position position="44"/>
    </location>
    <ligand>
        <name>Zn(2+)</name>
        <dbReference type="ChEBI" id="CHEBI:29105"/>
    </ligand>
</feature>
<feature type="binding site" evidence="1">
    <location>
        <position position="200"/>
    </location>
    <ligand>
        <name>Zn(2+)</name>
        <dbReference type="ChEBI" id="CHEBI:29105"/>
    </ligand>
</feature>
<feature type="modified residue" description="Phosphoserine" evidence="2">
    <location>
        <position position="132"/>
    </location>
</feature>
<feature type="disulfide bond" evidence="1">
    <location>
        <begin position="79"/>
        <end position="191"/>
    </location>
</feature>
<feature type="disulfide bond" evidence="1">
    <location>
        <begin position="208"/>
        <end position="215"/>
    </location>
</feature>
<feature type="sequence conflict" description="In Ref. 2; AA sequence." evidence="4" ref="2">
    <original>E</original>
    <variation>Q</variation>
    <location>
        <position position="100"/>
    </location>
</feature>
<feature type="sequence conflict" description="In Ref. 2; AA sequence." evidence="4" ref="2">
    <original>N</original>
    <variation>D</variation>
    <location>
        <position position="179"/>
    </location>
</feature>
<organism>
    <name type="scientific">Macaca mulatta</name>
    <name type="common">Rhesus macaque</name>
    <dbReference type="NCBI Taxonomy" id="9544"/>
    <lineage>
        <taxon>Eukaryota</taxon>
        <taxon>Metazoa</taxon>
        <taxon>Chordata</taxon>
        <taxon>Craniata</taxon>
        <taxon>Vertebrata</taxon>
        <taxon>Euteleostomi</taxon>
        <taxon>Mammalia</taxon>
        <taxon>Eutheria</taxon>
        <taxon>Euarchontoglires</taxon>
        <taxon>Primates</taxon>
        <taxon>Haplorrhini</taxon>
        <taxon>Catarrhini</taxon>
        <taxon>Cercopithecidae</taxon>
        <taxon>Cercopithecinae</taxon>
        <taxon>Macaca</taxon>
    </lineage>
</organism>
<dbReference type="EMBL" id="L16556">
    <property type="protein sequence ID" value="AAA18842.1"/>
    <property type="molecule type" value="mRNA"/>
</dbReference>
<dbReference type="PIR" id="I67410">
    <property type="entry name" value="I67410"/>
</dbReference>
<dbReference type="RefSeq" id="NP_001036203.1">
    <property type="nucleotide sequence ID" value="NM_001042738.1"/>
</dbReference>
<dbReference type="BMRB" id="P33093"/>
<dbReference type="SMR" id="P33093"/>
<dbReference type="FunCoup" id="P33093">
    <property type="interactions" value="990"/>
</dbReference>
<dbReference type="STRING" id="9544.ENSMMUP00000034200"/>
<dbReference type="Ensembl" id="ENSMMUT00000086046.1">
    <property type="protein sequence ID" value="ENSMMUP00000061131.1"/>
    <property type="gene ID" value="ENSMMUG00000039847.2"/>
</dbReference>
<dbReference type="GeneID" id="718156"/>
<dbReference type="KEGG" id="mcc:718156"/>
<dbReference type="CTD" id="2688"/>
<dbReference type="VEuPathDB" id="HostDB:ENSMMUG00000039847"/>
<dbReference type="GeneTree" id="ENSGT00950000182818"/>
<dbReference type="InParanoid" id="P33093"/>
<dbReference type="OrthoDB" id="9519099at2759"/>
<dbReference type="Proteomes" id="UP000006718">
    <property type="component" value="Chromosome 16"/>
</dbReference>
<dbReference type="Bgee" id="ENSMMUG00000039847">
    <property type="expression patterns" value="Expressed in adipose tissue and 4 other cell types or tissues"/>
</dbReference>
<dbReference type="ExpressionAtlas" id="P33093">
    <property type="expression patterns" value="baseline"/>
</dbReference>
<dbReference type="GO" id="GO:0005615">
    <property type="term" value="C:extracellular space"/>
    <property type="evidence" value="ECO:0000318"/>
    <property type="project" value="GO_Central"/>
</dbReference>
<dbReference type="GO" id="GO:0008083">
    <property type="term" value="F:growth factor activity"/>
    <property type="evidence" value="ECO:0000318"/>
    <property type="project" value="GO_Central"/>
</dbReference>
<dbReference type="GO" id="GO:0005131">
    <property type="term" value="F:growth hormone receptor binding"/>
    <property type="evidence" value="ECO:0000318"/>
    <property type="project" value="GO_Central"/>
</dbReference>
<dbReference type="GO" id="GO:0005179">
    <property type="term" value="F:hormone activity"/>
    <property type="evidence" value="ECO:0000318"/>
    <property type="project" value="GO_Central"/>
</dbReference>
<dbReference type="GO" id="GO:0046872">
    <property type="term" value="F:metal ion binding"/>
    <property type="evidence" value="ECO:0007669"/>
    <property type="project" value="UniProtKB-KW"/>
</dbReference>
<dbReference type="GO" id="GO:0048513">
    <property type="term" value="P:animal organ development"/>
    <property type="evidence" value="ECO:0000318"/>
    <property type="project" value="GO_Central"/>
</dbReference>
<dbReference type="GO" id="GO:0060396">
    <property type="term" value="P:growth hormone receptor signaling pathway"/>
    <property type="evidence" value="ECO:0000318"/>
    <property type="project" value="GO_Central"/>
</dbReference>
<dbReference type="GO" id="GO:0046427">
    <property type="term" value="P:positive regulation of receptor signaling pathway via JAK-STAT"/>
    <property type="evidence" value="ECO:0000318"/>
    <property type="project" value="GO_Central"/>
</dbReference>
<dbReference type="GO" id="GO:0031667">
    <property type="term" value="P:response to nutrient levels"/>
    <property type="evidence" value="ECO:0000318"/>
    <property type="project" value="GO_Central"/>
</dbReference>
<dbReference type="CDD" id="cd10285">
    <property type="entry name" value="somatotropin_like"/>
    <property type="match status" value="1"/>
</dbReference>
<dbReference type="FunFam" id="1.20.1250.10:FF:000012">
    <property type="entry name" value="Growth hormone 1"/>
    <property type="match status" value="1"/>
</dbReference>
<dbReference type="Gene3D" id="1.20.1250.10">
    <property type="match status" value="1"/>
</dbReference>
<dbReference type="InterPro" id="IPR009079">
    <property type="entry name" value="4_helix_cytokine-like_core"/>
</dbReference>
<dbReference type="InterPro" id="IPR034975">
    <property type="entry name" value="Somatotropin"/>
</dbReference>
<dbReference type="InterPro" id="IPR001400">
    <property type="entry name" value="Somatotropin/Prolactin"/>
</dbReference>
<dbReference type="InterPro" id="IPR018116">
    <property type="entry name" value="Somatotropin_CS"/>
</dbReference>
<dbReference type="PANTHER" id="PTHR11417:SF2">
    <property type="entry name" value="SOMATOTROPIN"/>
    <property type="match status" value="1"/>
</dbReference>
<dbReference type="PANTHER" id="PTHR11417">
    <property type="entry name" value="SOMATOTROPIN,PROLACTIN"/>
    <property type="match status" value="1"/>
</dbReference>
<dbReference type="Pfam" id="PF00103">
    <property type="entry name" value="Hormone_1"/>
    <property type="match status" value="1"/>
</dbReference>
<dbReference type="PRINTS" id="PR00836">
    <property type="entry name" value="SOMATOTROPIN"/>
</dbReference>
<dbReference type="SUPFAM" id="SSF47266">
    <property type="entry name" value="4-helical cytokines"/>
    <property type="match status" value="1"/>
</dbReference>
<dbReference type="PROSITE" id="PS00266">
    <property type="entry name" value="SOMATOTROPIN_1"/>
    <property type="match status" value="1"/>
</dbReference>
<dbReference type="PROSITE" id="PS00338">
    <property type="entry name" value="SOMATOTROPIN_2"/>
    <property type="match status" value="1"/>
</dbReference>
<keyword id="KW-0903">Direct protein sequencing</keyword>
<keyword id="KW-1015">Disulfide bond</keyword>
<keyword id="KW-0372">Hormone</keyword>
<keyword id="KW-0479">Metal-binding</keyword>
<keyword id="KW-0597">Phosphoprotein</keyword>
<keyword id="KW-1185">Reference proteome</keyword>
<keyword id="KW-0964">Secreted</keyword>
<keyword id="KW-0732">Signal</keyword>
<keyword id="KW-0862">Zinc</keyword>
<evidence type="ECO:0000250" key="1"/>
<evidence type="ECO:0000250" key="2">
    <source>
        <dbReference type="UniProtKB" id="P01241"/>
    </source>
</evidence>
<evidence type="ECO:0000269" key="3">
    <source>
    </source>
</evidence>
<evidence type="ECO:0000305" key="4"/>
<reference key="1">
    <citation type="journal article" date="1993" name="Endocrinology">
        <title>Cloning of four growth hormone/chorionic somatomammotropin-related complementary deoxyribonucleic acids differentially expressed during pregnancy in the rhesus monkey placenta.</title>
        <authorList>
            <person name="Golos T.G."/>
            <person name="Durning M."/>
            <person name="Fisher J.M."/>
            <person name="Fowler P.D."/>
        </authorList>
    </citation>
    <scope>NUCLEOTIDE SEQUENCE [MRNA]</scope>
</reference>
<reference key="2">
    <citation type="journal article" date="1986" name="Arch. Biochem. Biophys.">
        <title>The primary structure of monkey pituitary growth hormone.</title>
        <authorList>
            <person name="Li C.H."/>
            <person name="Chung D."/>
            <person name="Lahm H.W."/>
            <person name="Stein S."/>
        </authorList>
    </citation>
    <scope>PROTEIN SEQUENCE OF 27-217</scope>
</reference>
<proteinExistence type="evidence at protein level"/>
<comment type="function">
    <text>Plays an important role in growth control. Its major role in stimulating body growth is to stimulate the liver and other tissues to secrete IGF1. It stimulates both the differentiation and proliferation of myoblasts. It also stimulates amino acid uptake and protein synthesis in muscle and other tissues.</text>
</comment>
<comment type="subcellular location">
    <subcellularLocation>
        <location>Secreted</location>
    </subcellularLocation>
</comment>
<comment type="similarity">
    <text evidence="4">Belongs to the somatotropin/prolactin family.</text>
</comment>
<gene>
    <name type="primary">GH1</name>
</gene>
<sequence>MAAGSRTSLLLAFALLCLPWLQEGSAFPTIPLSRLFDNAMLRAHRLHQLAFDTYQEFEEAYIPKEQKYSFLQNPQTSLCFSESIPTPSNREETQQKSNLELLRISLLLIQSWLEPVQFLRSVFANSLVYGTSYSDVYDLLKDLEEGIQTLMGRLEDGSSRTGQIFKQTYSKFDTNSHNNDALLKNYGLLYCFRKDMDKIETFLRIVQCRSVEGSCGF</sequence>
<protein>
    <recommendedName>
        <fullName>Somatotropin</fullName>
    </recommendedName>
    <alternativeName>
        <fullName>Growth hormone</fullName>
        <shortName>GH</shortName>
        <shortName>GH-N</shortName>
    </alternativeName>
    <alternativeName>
        <fullName>Growth hormone 1</fullName>
    </alternativeName>
    <alternativeName>
        <fullName>Pituitary growth hormone</fullName>
    </alternativeName>
</protein>
<accession>P33093</accession>